<feature type="chain" id="PRO_0000072928" description="Glycine--tRNA ligase beta subunit">
    <location>
        <begin position="1"/>
        <end position="678"/>
    </location>
</feature>
<dbReference type="EC" id="6.1.1.14" evidence="1"/>
<dbReference type="EMBL" id="AE007317">
    <property type="protein sequence ID" value="AAL00132.1"/>
    <property type="molecule type" value="Genomic_DNA"/>
</dbReference>
<dbReference type="PIR" id="G98037">
    <property type="entry name" value="G98037"/>
</dbReference>
<dbReference type="RefSeq" id="NP_358921.1">
    <property type="nucleotide sequence ID" value="NC_003098.1"/>
</dbReference>
<dbReference type="RefSeq" id="WP_000164753.1">
    <property type="nucleotide sequence ID" value="NC_003098.1"/>
</dbReference>
<dbReference type="SMR" id="Q8DP66"/>
<dbReference type="STRING" id="171101.spr1328"/>
<dbReference type="KEGG" id="spr:spr1328"/>
<dbReference type="PATRIC" id="fig|171101.6.peg.1440"/>
<dbReference type="eggNOG" id="COG0751">
    <property type="taxonomic scope" value="Bacteria"/>
</dbReference>
<dbReference type="HOGENOM" id="CLU_007220_2_2_9"/>
<dbReference type="Proteomes" id="UP000000586">
    <property type="component" value="Chromosome"/>
</dbReference>
<dbReference type="GO" id="GO:0005829">
    <property type="term" value="C:cytosol"/>
    <property type="evidence" value="ECO:0000318"/>
    <property type="project" value="GO_Central"/>
</dbReference>
<dbReference type="GO" id="GO:0004814">
    <property type="term" value="F:arginine-tRNA ligase activity"/>
    <property type="evidence" value="ECO:0007669"/>
    <property type="project" value="InterPro"/>
</dbReference>
<dbReference type="GO" id="GO:0005524">
    <property type="term" value="F:ATP binding"/>
    <property type="evidence" value="ECO:0007669"/>
    <property type="project" value="UniProtKB-UniRule"/>
</dbReference>
<dbReference type="GO" id="GO:0004820">
    <property type="term" value="F:glycine-tRNA ligase activity"/>
    <property type="evidence" value="ECO:0007669"/>
    <property type="project" value="UniProtKB-UniRule"/>
</dbReference>
<dbReference type="GO" id="GO:0006420">
    <property type="term" value="P:arginyl-tRNA aminoacylation"/>
    <property type="evidence" value="ECO:0007669"/>
    <property type="project" value="InterPro"/>
</dbReference>
<dbReference type="GO" id="GO:0006426">
    <property type="term" value="P:glycyl-tRNA aminoacylation"/>
    <property type="evidence" value="ECO:0007669"/>
    <property type="project" value="UniProtKB-UniRule"/>
</dbReference>
<dbReference type="HAMAP" id="MF_00255">
    <property type="entry name" value="Gly_tRNA_synth_beta"/>
    <property type="match status" value="1"/>
</dbReference>
<dbReference type="InterPro" id="IPR008909">
    <property type="entry name" value="DALR_anticod-bd"/>
</dbReference>
<dbReference type="InterPro" id="IPR015944">
    <property type="entry name" value="Gly-tRNA-synth_bsu"/>
</dbReference>
<dbReference type="InterPro" id="IPR006194">
    <property type="entry name" value="Gly-tRNA-synth_heterodimer"/>
</dbReference>
<dbReference type="NCBIfam" id="TIGR00211">
    <property type="entry name" value="glyS"/>
    <property type="match status" value="1"/>
</dbReference>
<dbReference type="PANTHER" id="PTHR30075:SF2">
    <property type="entry name" value="GLYCINE--TRNA LIGASE, CHLOROPLASTIC_MITOCHONDRIAL 2"/>
    <property type="match status" value="1"/>
</dbReference>
<dbReference type="PANTHER" id="PTHR30075">
    <property type="entry name" value="GLYCYL-TRNA SYNTHETASE"/>
    <property type="match status" value="1"/>
</dbReference>
<dbReference type="Pfam" id="PF05746">
    <property type="entry name" value="DALR_1"/>
    <property type="match status" value="1"/>
</dbReference>
<dbReference type="Pfam" id="PF02092">
    <property type="entry name" value="tRNA_synt_2f"/>
    <property type="match status" value="1"/>
</dbReference>
<dbReference type="PRINTS" id="PR01045">
    <property type="entry name" value="TRNASYNTHGB"/>
</dbReference>
<dbReference type="SUPFAM" id="SSF109604">
    <property type="entry name" value="HD-domain/PDEase-like"/>
    <property type="match status" value="1"/>
</dbReference>
<dbReference type="PROSITE" id="PS50861">
    <property type="entry name" value="AA_TRNA_LIGASE_II_GLYAB"/>
    <property type="match status" value="1"/>
</dbReference>
<sequence length="678" mass="75410">MTKNLLVELGLEELPAYVVTPSEKQLGEKMAAFLKENRLSFEAIQTFSTPRRLAVRVTGLSDKQSDLTEDFKGPAKKIALDSDGNFTKAAQGFVRGKGLTVEDIEFREIKGEEYVYVTKEEVGQAVEAIVPGVVDVLKSLTFPVSMHWAGNSFEYIRPVHTLTVLLDEQEFDLDFLDIKGGRVSRGHRFLGKETKIQSALSYEEDLRKQFVIADPCEREQMIVDQIKKIEAKHGVRIEIDADLLNEVLNLVEYPTAFMGSFDAKYLEVPEEVLVTSMKEHQRYFVVRDQDGKLLPNFISVRNGNAERLKNVIKGNEKVLVARLEDGEFFWREDQKLVISDLVEKLNNVTFHEKIGSLREHMIRTGQITVLLAEKAGLSVDETVDLARAAAIYKFDLLTGMVGEFDELQGIMGEKYTLLAGETPAVAAAIREHYMPTSAEGELPESKVGAVLAIADKLDTILSFFSVGLIPSGSNDPYALRRATQGVVRILDAFGWHIAMDELIDSLYALKFDSLTYENKAEVMDFIKARVDKMMGSTPKDIKEAVLAGSNFVVADMLEAASALVEVSKEEDFKPSVESLSRAFNLAEKAEGVATVDSALFENDQEKALAEAVETLVLSGPASQQLKQLFALSPVIDAFFENTMVMAEDQAVRQNRLAILSQLTKKAAKFACFNQINTK</sequence>
<keyword id="KW-0030">Aminoacyl-tRNA synthetase</keyword>
<keyword id="KW-0067">ATP-binding</keyword>
<keyword id="KW-0963">Cytoplasm</keyword>
<keyword id="KW-0436">Ligase</keyword>
<keyword id="KW-0547">Nucleotide-binding</keyword>
<keyword id="KW-0648">Protein biosynthesis</keyword>
<keyword id="KW-1185">Reference proteome</keyword>
<organism>
    <name type="scientific">Streptococcus pneumoniae (strain ATCC BAA-255 / R6)</name>
    <dbReference type="NCBI Taxonomy" id="171101"/>
    <lineage>
        <taxon>Bacteria</taxon>
        <taxon>Bacillati</taxon>
        <taxon>Bacillota</taxon>
        <taxon>Bacilli</taxon>
        <taxon>Lactobacillales</taxon>
        <taxon>Streptococcaceae</taxon>
        <taxon>Streptococcus</taxon>
    </lineage>
</organism>
<accession>Q8DP66</accession>
<proteinExistence type="inferred from homology"/>
<evidence type="ECO:0000255" key="1">
    <source>
        <dbReference type="HAMAP-Rule" id="MF_00255"/>
    </source>
</evidence>
<gene>
    <name evidence="1" type="primary">glyS</name>
    <name type="ordered locus">spr1328</name>
</gene>
<reference key="1">
    <citation type="journal article" date="2001" name="J. Bacteriol.">
        <title>Genome of the bacterium Streptococcus pneumoniae strain R6.</title>
        <authorList>
            <person name="Hoskins J."/>
            <person name="Alborn W.E. Jr."/>
            <person name="Arnold J."/>
            <person name="Blaszczak L.C."/>
            <person name="Burgett S."/>
            <person name="DeHoff B.S."/>
            <person name="Estrem S.T."/>
            <person name="Fritz L."/>
            <person name="Fu D.-J."/>
            <person name="Fuller W."/>
            <person name="Geringer C."/>
            <person name="Gilmour R."/>
            <person name="Glass J.S."/>
            <person name="Khoja H."/>
            <person name="Kraft A.R."/>
            <person name="Lagace R.E."/>
            <person name="LeBlanc D.J."/>
            <person name="Lee L.N."/>
            <person name="Lefkowitz E.J."/>
            <person name="Lu J."/>
            <person name="Matsushima P."/>
            <person name="McAhren S.M."/>
            <person name="McHenney M."/>
            <person name="McLeaster K."/>
            <person name="Mundy C.W."/>
            <person name="Nicas T.I."/>
            <person name="Norris F.H."/>
            <person name="O'Gara M."/>
            <person name="Peery R.B."/>
            <person name="Robertson G.T."/>
            <person name="Rockey P."/>
            <person name="Sun P.-M."/>
            <person name="Winkler M.E."/>
            <person name="Yang Y."/>
            <person name="Young-Bellido M."/>
            <person name="Zhao G."/>
            <person name="Zook C.A."/>
            <person name="Baltz R.H."/>
            <person name="Jaskunas S.R."/>
            <person name="Rosteck P.R. Jr."/>
            <person name="Skatrud P.L."/>
            <person name="Glass J.I."/>
        </authorList>
    </citation>
    <scope>NUCLEOTIDE SEQUENCE [LARGE SCALE GENOMIC DNA]</scope>
    <source>
        <strain>ATCC BAA-255 / R6</strain>
    </source>
</reference>
<name>SYGB_STRR6</name>
<protein>
    <recommendedName>
        <fullName evidence="1">Glycine--tRNA ligase beta subunit</fullName>
        <ecNumber evidence="1">6.1.1.14</ecNumber>
    </recommendedName>
    <alternativeName>
        <fullName evidence="1">Glycyl-tRNA synthetase beta subunit</fullName>
        <shortName evidence="1">GlyRS</shortName>
    </alternativeName>
</protein>
<comment type="catalytic activity">
    <reaction evidence="1">
        <text>tRNA(Gly) + glycine + ATP = glycyl-tRNA(Gly) + AMP + diphosphate</text>
        <dbReference type="Rhea" id="RHEA:16013"/>
        <dbReference type="Rhea" id="RHEA-COMP:9664"/>
        <dbReference type="Rhea" id="RHEA-COMP:9683"/>
        <dbReference type="ChEBI" id="CHEBI:30616"/>
        <dbReference type="ChEBI" id="CHEBI:33019"/>
        <dbReference type="ChEBI" id="CHEBI:57305"/>
        <dbReference type="ChEBI" id="CHEBI:78442"/>
        <dbReference type="ChEBI" id="CHEBI:78522"/>
        <dbReference type="ChEBI" id="CHEBI:456215"/>
        <dbReference type="EC" id="6.1.1.14"/>
    </reaction>
</comment>
<comment type="subunit">
    <text evidence="1">Tetramer of two alpha and two beta subunits.</text>
</comment>
<comment type="subcellular location">
    <subcellularLocation>
        <location evidence="1">Cytoplasm</location>
    </subcellularLocation>
</comment>
<comment type="similarity">
    <text evidence="1">Belongs to the class-II aminoacyl-tRNA synthetase family.</text>
</comment>